<gene>
    <name evidence="1" type="primary">rplX</name>
    <name type="ordered locus">IL1905</name>
</gene>
<sequence length="104" mass="11284">MAAKIKRDDEVVVLAGKDKGKQGKVLKVLTDKDRVIVEGVNVVKKHQKPNPALGESGGIVEQEAAIHISNVAILNPETGKADRVGFRLEDGKKVRFFKSNNAII</sequence>
<dbReference type="EMBL" id="AE017340">
    <property type="protein sequence ID" value="AAV82737.1"/>
    <property type="molecule type" value="Genomic_DNA"/>
</dbReference>
<dbReference type="RefSeq" id="WP_011235136.1">
    <property type="nucleotide sequence ID" value="NC_006512.1"/>
</dbReference>
<dbReference type="SMR" id="Q5QXW9"/>
<dbReference type="STRING" id="283942.IL1905"/>
<dbReference type="GeneID" id="41337093"/>
<dbReference type="KEGG" id="ilo:IL1905"/>
<dbReference type="eggNOG" id="COG0198">
    <property type="taxonomic scope" value="Bacteria"/>
</dbReference>
<dbReference type="HOGENOM" id="CLU_093315_2_2_6"/>
<dbReference type="OrthoDB" id="9807419at2"/>
<dbReference type="Proteomes" id="UP000001171">
    <property type="component" value="Chromosome"/>
</dbReference>
<dbReference type="GO" id="GO:1990904">
    <property type="term" value="C:ribonucleoprotein complex"/>
    <property type="evidence" value="ECO:0007669"/>
    <property type="project" value="UniProtKB-KW"/>
</dbReference>
<dbReference type="GO" id="GO:0005840">
    <property type="term" value="C:ribosome"/>
    <property type="evidence" value="ECO:0007669"/>
    <property type="project" value="UniProtKB-KW"/>
</dbReference>
<dbReference type="GO" id="GO:0019843">
    <property type="term" value="F:rRNA binding"/>
    <property type="evidence" value="ECO:0007669"/>
    <property type="project" value="UniProtKB-UniRule"/>
</dbReference>
<dbReference type="GO" id="GO:0003735">
    <property type="term" value="F:structural constituent of ribosome"/>
    <property type="evidence" value="ECO:0007669"/>
    <property type="project" value="InterPro"/>
</dbReference>
<dbReference type="GO" id="GO:0006412">
    <property type="term" value="P:translation"/>
    <property type="evidence" value="ECO:0007669"/>
    <property type="project" value="UniProtKB-UniRule"/>
</dbReference>
<dbReference type="CDD" id="cd06089">
    <property type="entry name" value="KOW_RPL26"/>
    <property type="match status" value="1"/>
</dbReference>
<dbReference type="FunFam" id="2.30.30.30:FF:000004">
    <property type="entry name" value="50S ribosomal protein L24"/>
    <property type="match status" value="1"/>
</dbReference>
<dbReference type="Gene3D" id="2.30.30.30">
    <property type="match status" value="1"/>
</dbReference>
<dbReference type="HAMAP" id="MF_01326_B">
    <property type="entry name" value="Ribosomal_uL24_B"/>
    <property type="match status" value="1"/>
</dbReference>
<dbReference type="InterPro" id="IPR005824">
    <property type="entry name" value="KOW"/>
</dbReference>
<dbReference type="InterPro" id="IPR014722">
    <property type="entry name" value="Rib_uL2_dom2"/>
</dbReference>
<dbReference type="InterPro" id="IPR003256">
    <property type="entry name" value="Ribosomal_uL24"/>
</dbReference>
<dbReference type="InterPro" id="IPR005825">
    <property type="entry name" value="Ribosomal_uL24_CS"/>
</dbReference>
<dbReference type="InterPro" id="IPR041988">
    <property type="entry name" value="Ribosomal_uL24_KOW"/>
</dbReference>
<dbReference type="InterPro" id="IPR008991">
    <property type="entry name" value="Translation_prot_SH3-like_sf"/>
</dbReference>
<dbReference type="NCBIfam" id="TIGR01079">
    <property type="entry name" value="rplX_bact"/>
    <property type="match status" value="1"/>
</dbReference>
<dbReference type="PANTHER" id="PTHR12903">
    <property type="entry name" value="MITOCHONDRIAL RIBOSOMAL PROTEIN L24"/>
    <property type="match status" value="1"/>
</dbReference>
<dbReference type="Pfam" id="PF00467">
    <property type="entry name" value="KOW"/>
    <property type="match status" value="1"/>
</dbReference>
<dbReference type="Pfam" id="PF17136">
    <property type="entry name" value="ribosomal_L24"/>
    <property type="match status" value="1"/>
</dbReference>
<dbReference type="SMART" id="SM00739">
    <property type="entry name" value="KOW"/>
    <property type="match status" value="1"/>
</dbReference>
<dbReference type="SUPFAM" id="SSF50104">
    <property type="entry name" value="Translation proteins SH3-like domain"/>
    <property type="match status" value="1"/>
</dbReference>
<dbReference type="PROSITE" id="PS01108">
    <property type="entry name" value="RIBOSOMAL_L24"/>
    <property type="match status" value="1"/>
</dbReference>
<accession>Q5QXW9</accession>
<evidence type="ECO:0000255" key="1">
    <source>
        <dbReference type="HAMAP-Rule" id="MF_01326"/>
    </source>
</evidence>
<evidence type="ECO:0000305" key="2"/>
<organism>
    <name type="scientific">Idiomarina loihiensis (strain ATCC BAA-735 / DSM 15497 / L2-TR)</name>
    <dbReference type="NCBI Taxonomy" id="283942"/>
    <lineage>
        <taxon>Bacteria</taxon>
        <taxon>Pseudomonadati</taxon>
        <taxon>Pseudomonadota</taxon>
        <taxon>Gammaproteobacteria</taxon>
        <taxon>Alteromonadales</taxon>
        <taxon>Idiomarinaceae</taxon>
        <taxon>Idiomarina</taxon>
    </lineage>
</organism>
<comment type="function">
    <text evidence="1">One of two assembly initiator proteins, it binds directly to the 5'-end of the 23S rRNA, where it nucleates assembly of the 50S subunit.</text>
</comment>
<comment type="function">
    <text evidence="1">One of the proteins that surrounds the polypeptide exit tunnel on the outside of the subunit.</text>
</comment>
<comment type="subunit">
    <text evidence="1">Part of the 50S ribosomal subunit.</text>
</comment>
<comment type="similarity">
    <text evidence="1">Belongs to the universal ribosomal protein uL24 family.</text>
</comment>
<feature type="chain" id="PRO_0000241608" description="Large ribosomal subunit protein uL24">
    <location>
        <begin position="1"/>
        <end position="104"/>
    </location>
</feature>
<keyword id="KW-1185">Reference proteome</keyword>
<keyword id="KW-0687">Ribonucleoprotein</keyword>
<keyword id="KW-0689">Ribosomal protein</keyword>
<keyword id="KW-0694">RNA-binding</keyword>
<keyword id="KW-0699">rRNA-binding</keyword>
<proteinExistence type="inferred from homology"/>
<reference key="1">
    <citation type="journal article" date="2004" name="Proc. Natl. Acad. Sci. U.S.A.">
        <title>Genome sequence of the deep-sea gamma-proteobacterium Idiomarina loihiensis reveals amino acid fermentation as a source of carbon and energy.</title>
        <authorList>
            <person name="Hou S."/>
            <person name="Saw J.H."/>
            <person name="Lee K.S."/>
            <person name="Freitas T.A."/>
            <person name="Belisle C."/>
            <person name="Kawarabayasi Y."/>
            <person name="Donachie S.P."/>
            <person name="Pikina A."/>
            <person name="Galperin M.Y."/>
            <person name="Koonin E.V."/>
            <person name="Makarova K.S."/>
            <person name="Omelchenko M.V."/>
            <person name="Sorokin A."/>
            <person name="Wolf Y.I."/>
            <person name="Li Q.X."/>
            <person name="Keum Y.S."/>
            <person name="Campbell S."/>
            <person name="Denery J."/>
            <person name="Aizawa S."/>
            <person name="Shibata S."/>
            <person name="Malahoff A."/>
            <person name="Alam M."/>
        </authorList>
    </citation>
    <scope>NUCLEOTIDE SEQUENCE [LARGE SCALE GENOMIC DNA]</scope>
    <source>
        <strain>ATCC BAA-735 / DSM 15497 / L2-TR</strain>
    </source>
</reference>
<protein>
    <recommendedName>
        <fullName evidence="1">Large ribosomal subunit protein uL24</fullName>
    </recommendedName>
    <alternativeName>
        <fullName evidence="2">50S ribosomal protein L24</fullName>
    </alternativeName>
</protein>
<name>RL24_IDILO</name>